<evidence type="ECO:0000250" key="1"/>
<evidence type="ECO:0000255" key="2"/>
<evidence type="ECO:0000255" key="3">
    <source>
        <dbReference type="PROSITE-ProRule" id="PRU00722"/>
    </source>
</evidence>
<evidence type="ECO:0000305" key="4"/>
<accession>A4K2R5</accession>
<keyword id="KW-0044">Antibiotic</keyword>
<keyword id="KW-0929">Antimicrobial</keyword>
<keyword id="KW-1015">Disulfide bond</keyword>
<keyword id="KW-0646">Protease inhibitor</keyword>
<keyword id="KW-1185">Reference proteome</keyword>
<keyword id="KW-0964">Secreted</keyword>
<keyword id="KW-0722">Serine protease inhibitor</keyword>
<keyword id="KW-0732">Signal</keyword>
<proteinExistence type="inferred from homology"/>
<comment type="function">
    <text evidence="1">Antibacterial protein. Putative acid-stable proteinase inhibitor (By similarity).</text>
</comment>
<comment type="subcellular location">
    <subcellularLocation>
        <location evidence="4">Secreted</location>
    </subcellularLocation>
</comment>
<reference key="1">
    <citation type="journal article" date="2007" name="Genome Res.">
        <title>Comparative sequence analyses reveal rapid and divergent evolutionary changes of the WFDC locus in the primate lineage.</title>
        <authorList>
            <consortium name="NISC comparative sequencing program"/>
            <person name="Hurle B."/>
            <person name="Swanson W."/>
            <person name="Green E.D."/>
        </authorList>
    </citation>
    <scope>NUCLEOTIDE SEQUENCE [GENOMIC DNA]</scope>
</reference>
<name>WFD12_GORGO</name>
<gene>
    <name type="primary">WFDC12</name>
</gene>
<feature type="signal peptide" evidence="2">
    <location>
        <begin position="1"/>
        <end position="23"/>
    </location>
</feature>
<feature type="chain" id="PRO_0000289649" description="WAP four-disulfide core domain protein 12">
    <location>
        <begin position="24"/>
        <end position="90"/>
    </location>
</feature>
<feature type="domain" description="WAP" evidence="3">
    <location>
        <begin position="27"/>
        <end position="74"/>
    </location>
</feature>
<feature type="disulfide bond" evidence="3">
    <location>
        <begin position="34"/>
        <end position="62"/>
    </location>
</feature>
<feature type="disulfide bond" evidence="3">
    <location>
        <begin position="41"/>
        <end position="66"/>
    </location>
</feature>
<feature type="disulfide bond" evidence="3">
    <location>
        <begin position="49"/>
        <end position="61"/>
    </location>
</feature>
<feature type="disulfide bond" evidence="3">
    <location>
        <begin position="55"/>
        <end position="70"/>
    </location>
</feature>
<protein>
    <recommendedName>
        <fullName>WAP four-disulfide core domain protein 12</fullName>
    </recommendedName>
</protein>
<organism>
    <name type="scientific">Gorilla gorilla gorilla</name>
    <name type="common">Western lowland gorilla</name>
    <dbReference type="NCBI Taxonomy" id="9595"/>
    <lineage>
        <taxon>Eukaryota</taxon>
        <taxon>Metazoa</taxon>
        <taxon>Chordata</taxon>
        <taxon>Craniata</taxon>
        <taxon>Vertebrata</taxon>
        <taxon>Euteleostomi</taxon>
        <taxon>Mammalia</taxon>
        <taxon>Eutheria</taxon>
        <taxon>Euarchontoglires</taxon>
        <taxon>Primates</taxon>
        <taxon>Haplorrhini</taxon>
        <taxon>Catarrhini</taxon>
        <taxon>Hominidae</taxon>
        <taxon>Gorilla</taxon>
    </lineage>
</organism>
<dbReference type="EMBL" id="DP000041">
    <property type="protein sequence ID" value="ABO52950.1"/>
    <property type="molecule type" value="Genomic_DNA"/>
</dbReference>
<dbReference type="RefSeq" id="XP_004062269.2">
    <property type="nucleotide sequence ID" value="XM_004062221.5"/>
</dbReference>
<dbReference type="SMR" id="A4K2R5"/>
<dbReference type="STRING" id="9593.ENSGGOP00000027214"/>
<dbReference type="MEROPS" id="I17.003"/>
<dbReference type="GeneID" id="101130996"/>
<dbReference type="KEGG" id="ggo:101130996"/>
<dbReference type="CTD" id="128488"/>
<dbReference type="eggNOG" id="ENOG502TDXW">
    <property type="taxonomic scope" value="Eukaryota"/>
</dbReference>
<dbReference type="HOGENOM" id="CLU_172659_0_0_1"/>
<dbReference type="InParanoid" id="A4K2R5"/>
<dbReference type="OrthoDB" id="10583at9604"/>
<dbReference type="Proteomes" id="UP000001519">
    <property type="component" value="Unplaced"/>
</dbReference>
<dbReference type="GO" id="GO:0005615">
    <property type="term" value="C:extracellular space"/>
    <property type="evidence" value="ECO:0000318"/>
    <property type="project" value="GO_Central"/>
</dbReference>
<dbReference type="GO" id="GO:0004867">
    <property type="term" value="F:serine-type endopeptidase inhibitor activity"/>
    <property type="evidence" value="ECO:0000318"/>
    <property type="project" value="GO_Central"/>
</dbReference>
<dbReference type="GO" id="GO:0019731">
    <property type="term" value="P:antibacterial humoral response"/>
    <property type="evidence" value="ECO:0000318"/>
    <property type="project" value="GO_Central"/>
</dbReference>
<dbReference type="GO" id="GO:0045087">
    <property type="term" value="P:innate immune response"/>
    <property type="evidence" value="ECO:0000318"/>
    <property type="project" value="GO_Central"/>
</dbReference>
<dbReference type="FunFam" id="4.10.75.10:FF:000005">
    <property type="entry name" value="WAP four-disulfide core domain protein 12"/>
    <property type="match status" value="1"/>
</dbReference>
<dbReference type="Gene3D" id="4.10.75.10">
    <property type="entry name" value="Elafin-like"/>
    <property type="match status" value="1"/>
</dbReference>
<dbReference type="InterPro" id="IPR036645">
    <property type="entry name" value="Elafin-like_sf"/>
</dbReference>
<dbReference type="InterPro" id="IPR008197">
    <property type="entry name" value="WAP_dom"/>
</dbReference>
<dbReference type="InterPro" id="IPR050514">
    <property type="entry name" value="WAP_four-disulfide_core"/>
</dbReference>
<dbReference type="PANTHER" id="PTHR19441:SF42">
    <property type="entry name" value="WAP FOUR-DISULFIDE CORE DOMAIN PROTEIN 12"/>
    <property type="match status" value="1"/>
</dbReference>
<dbReference type="PANTHER" id="PTHR19441">
    <property type="entry name" value="WHEY ACDIC PROTEIN WAP"/>
    <property type="match status" value="1"/>
</dbReference>
<dbReference type="Pfam" id="PF00095">
    <property type="entry name" value="WAP"/>
    <property type="match status" value="1"/>
</dbReference>
<dbReference type="PRINTS" id="PR00003">
    <property type="entry name" value="4DISULPHCORE"/>
</dbReference>
<dbReference type="SMART" id="SM00217">
    <property type="entry name" value="WAP"/>
    <property type="match status" value="1"/>
</dbReference>
<dbReference type="SUPFAM" id="SSF57256">
    <property type="entry name" value="Elafin-like"/>
    <property type="match status" value="1"/>
</dbReference>
<dbReference type="PROSITE" id="PS51390">
    <property type="entry name" value="WAP"/>
    <property type="match status" value="1"/>
</dbReference>
<sequence length="90" mass="9731">MGSSSFLVLMVSLALVTLVAVEGVKEGIEKAGVCPADNVRCFKSDPPQCHTDQDCLGERKCCYLHCGFKCVIPVKELEEGGNKDEDVSRP</sequence>